<organism>
    <name type="scientific">Homo sapiens</name>
    <name type="common">Human</name>
    <dbReference type="NCBI Taxonomy" id="9606"/>
    <lineage>
        <taxon>Eukaryota</taxon>
        <taxon>Metazoa</taxon>
        <taxon>Chordata</taxon>
        <taxon>Craniata</taxon>
        <taxon>Vertebrata</taxon>
        <taxon>Euteleostomi</taxon>
        <taxon>Mammalia</taxon>
        <taxon>Eutheria</taxon>
        <taxon>Euarchontoglires</taxon>
        <taxon>Primates</taxon>
        <taxon>Haplorrhini</taxon>
        <taxon>Catarrhini</taxon>
        <taxon>Hominidae</taxon>
        <taxon>Homo</taxon>
    </lineage>
</organism>
<keyword id="KW-0002">3D-structure</keyword>
<keyword id="KW-0025">Alternative splicing</keyword>
<keyword id="KW-0130">Cell adhesion</keyword>
<keyword id="KW-1003">Cell membrane</keyword>
<keyword id="KW-0966">Cell projection</keyword>
<keyword id="KW-0963">Cytoplasm</keyword>
<keyword id="KW-0206">Cytoskeleton</keyword>
<keyword id="KW-0209">Deafness</keyword>
<keyword id="KW-0903">Direct protein sequencing</keyword>
<keyword id="KW-0225">Disease variant</keyword>
<keyword id="KW-1015">Disulfide bond</keyword>
<keyword id="KW-0325">Glycoprotein</keyword>
<keyword id="KW-0339">Growth factor</keyword>
<keyword id="KW-0472">Membrane</keyword>
<keyword id="KW-1010">Non-syndromic deafness</keyword>
<keyword id="KW-1267">Proteomics identification</keyword>
<keyword id="KW-1185">Reference proteome</keyword>
<keyword id="KW-0964">Secreted</keyword>
<keyword id="KW-0732">Signal</keyword>
<keyword id="KW-0812">Transmembrane</keyword>
<keyword id="KW-1133">Transmembrane helix</keyword>
<keyword id="KW-0897">Waardenburg syndrome</keyword>
<proteinExistence type="evidence at protein level"/>
<accession>P21583</accession>
<accession>A0AV09</accession>
<accession>A8K2Q4</accession>
<accession>B7ZLM4</accession>
<accession>Q16487</accession>
<accession>Q68DZ2</accession>
<accession>Q7M4N8</accession>
<accession>Q9UQK7</accession>
<sequence length="273" mass="30899">MKKTQTWILTCIYLQLLLFNPLVKTEGICRNRVTNNVKDVTKLVANLPKDYMITLKYVPGMDVLPSHCWISEMVVQLSDSLTDLLDKFSNISEGLSNYSIIDKLVNIVDDLVECVKENSSKDLKKSFKSPEPRLFTPEEFFRIFNRSIDAFKDFVVASETSDCVVSSTLSPEKDSRVSVTKPFMLPPVAASSLRNDSSSSNRKAKNPPGDSSLHWAAMALPALFSLIIGFAFGALYWKKRQPSLTRAVENIQINEEDNEISMLQEKEREFQEV</sequence>
<gene>
    <name evidence="20" type="primary">KITLG</name>
    <name type="synonym">MGF</name>
    <name type="synonym">SCF</name>
</gene>
<name>SCF_HUMAN</name>
<evidence type="ECO:0000250" key="1"/>
<evidence type="ECO:0000255" key="2"/>
<evidence type="ECO:0000269" key="3">
    <source>
    </source>
</evidence>
<evidence type="ECO:0000269" key="4">
    <source>
    </source>
</evidence>
<evidence type="ECO:0000269" key="5">
    <source>
    </source>
</evidence>
<evidence type="ECO:0000269" key="6">
    <source>
    </source>
</evidence>
<evidence type="ECO:0000269" key="7">
    <source>
    </source>
</evidence>
<evidence type="ECO:0000269" key="8">
    <source>
    </source>
</evidence>
<evidence type="ECO:0000269" key="9">
    <source>
    </source>
</evidence>
<evidence type="ECO:0000303" key="10">
    <source>
    </source>
</evidence>
<evidence type="ECO:0000303" key="11">
    <source>
    </source>
</evidence>
<evidence type="ECO:0000303" key="12">
    <source>
    </source>
</evidence>
<evidence type="ECO:0000303" key="13">
    <source>
    </source>
</evidence>
<evidence type="ECO:0000303" key="14">
    <source>
    </source>
</evidence>
<evidence type="ECO:0000303" key="15">
    <source>
    </source>
</evidence>
<evidence type="ECO:0000303" key="16">
    <source ref="4"/>
</evidence>
<evidence type="ECO:0000305" key="17"/>
<evidence type="ECO:0000305" key="18">
    <source>
    </source>
</evidence>
<evidence type="ECO:0000305" key="19">
    <source>
    </source>
</evidence>
<evidence type="ECO:0000312" key="20">
    <source>
        <dbReference type="HGNC" id="HGNC:6343"/>
    </source>
</evidence>
<evidence type="ECO:0007829" key="21">
    <source>
        <dbReference type="PDB" id="1EXZ"/>
    </source>
</evidence>
<evidence type="ECO:0007829" key="22">
    <source>
        <dbReference type="PDB" id="1SCF"/>
    </source>
</evidence>
<evidence type="ECO:0007829" key="23">
    <source>
        <dbReference type="PDB" id="8DFP"/>
    </source>
</evidence>
<protein>
    <recommendedName>
        <fullName>Kit ligand</fullName>
    </recommendedName>
    <alternativeName>
        <fullName evidence="18">Mast cell growth factor</fullName>
        <shortName evidence="18">MGF</shortName>
    </alternativeName>
    <alternativeName>
        <fullName evidence="19">Stem cell factor</fullName>
        <shortName evidence="19">SCF</shortName>
    </alternativeName>
    <alternativeName>
        <fullName>c-Kit ligand</fullName>
    </alternativeName>
    <component>
        <recommendedName>
            <fullName>Soluble KIT ligand</fullName>
            <shortName>sKITLG</shortName>
        </recommendedName>
    </component>
</protein>
<comment type="function">
    <text>Ligand for the receptor-type protein-tyrosine kinase KIT. Plays an essential role in the regulation of cell survival and proliferation, hematopoiesis, stem cell maintenance, gametogenesis, mast cell development, migration and function, and in melanogenesis. KITLG/SCF binding can activate several signaling pathways. Promotes phosphorylation of PIK3R1, the regulatory subunit of phosphatidylinositol 3-kinase, and subsequent activation of the kinase AKT1. KITLG/SCF and KIT also transmit signals via GRB2 and activation of RAS, RAF1 and the MAP kinases MAPK1/ERK2 and/or MAPK3/ERK1. KITLG/SCF and KIT promote activation of STAT family members STAT1, STAT3 and STAT5. KITLG/SCF and KIT promote activation of PLCG1, leading to the production of the cellular signaling molecules diacylglycerol and inositol 1,4,5-trisphosphate. KITLG/SCF acts synergistically with other cytokines, probably interleukins.</text>
</comment>
<comment type="subunit">
    <text evidence="4 17">Homodimer, non-covalently linked (Probable). Heterotetramer with KIT, binding two KIT molecules; thereby mediates KIT dimerization and subsequent activation by autophosphorylation.</text>
</comment>
<comment type="interaction">
    <interactant intactId="EBI-1379527">
        <id>P21583</id>
    </interactant>
    <interactant intactId="EBI-1379503">
        <id>P10721</id>
        <label>KIT</label>
    </interactant>
    <organismsDiffer>false</organismsDiffer>
    <experiments>2</experiments>
</comment>
<comment type="subcellular location">
    <molecule>Isoform 1</molecule>
    <subcellularLocation>
        <location>Cell membrane</location>
        <topology>Single-pass type I membrane protein</topology>
    </subcellularLocation>
</comment>
<comment type="subcellular location">
    <molecule>Isoform 2</molecule>
    <subcellularLocation>
        <location evidence="7">Cytoplasm</location>
    </subcellularLocation>
    <subcellularLocation>
        <location evidence="1">Cytoplasm</location>
        <location evidence="1">Cytoskeleton</location>
    </subcellularLocation>
    <subcellularLocation>
        <location evidence="7">Cell membrane</location>
        <topology evidence="1">Single-pass type I membrane protein</topology>
    </subcellularLocation>
    <subcellularLocation>
        <location evidence="7">Cell projection</location>
        <location evidence="7">Lamellipodium</location>
    </subcellularLocation>
    <subcellularLocation>
        <location evidence="7">Cell projection</location>
        <location evidence="7">Filopodium</location>
    </subcellularLocation>
</comment>
<comment type="subcellular location">
    <molecule>Soluble KIT ligand</molecule>
    <subcellularLocation>
        <location>Secreted</location>
    </subcellularLocation>
</comment>
<comment type="alternative products">
    <event type="alternative splicing"/>
    <isoform>
        <id>P21583-1</id>
        <name>1</name>
        <name>SCF248</name>
        <sequence type="displayed"/>
    </isoform>
    <isoform>
        <id>P21583-2</id>
        <name>2</name>
        <name>SCF220</name>
        <sequence type="described" ref="VSP_006022"/>
    </isoform>
    <isoform>
        <id>P21583-3</id>
        <name>3</name>
        <sequence type="described" ref="VSP_032762 VSP_032763"/>
    </isoform>
</comment>
<comment type="developmental stage">
    <text>Acts in the early stages of hematopoiesis.</text>
</comment>
<comment type="PTM">
    <text evidence="3">A soluble form (sKITLG) is produced by proteolytic processing of isoform 1 in the extracellular domain.</text>
</comment>
<comment type="PTM">
    <text evidence="3">Found in two differentially glycosylated forms, LMW-SCF and HMW-SCF. LMW-SCF is fully N-glycosylated at Asn-145, partially N-glycosylated at Asn-90, O-glycosylated at Ser-167, Thr-168 and Thr-180, and not glycosylated at Asn-97 or Asn-118. HMW-SCF is N-glycosylated at Asn-118, Asn-90 and Asn-145, O-glycosylated at Ser-167, Thr-168 and Thr-180, and not glycosylated at Asn-97.</text>
</comment>
<comment type="PTM">
    <text evidence="3">A soluble form exists as a cleavage product of the extracellular domain.</text>
</comment>
<comment type="polymorphism">
    <text>Genetic variants in KITLG define the skin/hair/eye pigmentation variation locus 7 (SHEP7) [MIM:611664]. Hair, eye and skin pigmentation are among the most visible examples of human phenotypic variation, with a broad normal range that is subject to substantial geographic stratification. In the case of skin, individuals tend to have lighter pigmentation with increasing distance from the equator. By contrast, the majority of variation in human eye and hair color is found among individuals of European ancestry, with most other human populations fixed for brown eyes and black hair.</text>
</comment>
<comment type="polymorphism">
    <text evidence="6">A non-coding SNP (dbSNP:rs12821256) has been shown to be associated with classic blond hair color in Europeans. This SNP is located 350 kb upstream from KITLG, in an enhancer specifically active in the hair follicle environment. It alters a LEF1 binding site, reducing LEF1 responsiveness in cultured keratinocytes. This SNP is not associated with eye pigmentation. It is most prevalent in Northern Europe (PubMed:24880339).</text>
</comment>
<comment type="disease" evidence="5">
    <disease id="DI-02576">
        <name>Hyperpigmentation with or without hypopigmentation, familial progressive</name>
        <acronym>FPHH</acronym>
        <description>A disorder characterized by hyperpigmented patches in the skin, present in early infancy and increasing in size and number with age. Hyperpigmentation has variable intensity, and sometimes is associated with cafe-au-lait macules and larger hypopigmented ash-leaf macules.</description>
        <dbReference type="MIM" id="145250"/>
    </disease>
    <text>The disease is caused by variants affecting the gene represented in this entry.</text>
</comment>
<comment type="disease" evidence="7">
    <disease id="DI-04598">
        <name>Deafness, congenital, unilateral or asymmetric</name>
        <acronym>DCUA</acronym>
        <description>An autosomal dominant form of non-syndromic, sensorineural deafness characterized by inability to hear affecting one ear. Some patients suffers from asymmetric, bilateral hearing loss.</description>
        <dbReference type="MIM" id="616697"/>
    </disease>
    <text>The disease is caused by variants affecting the gene represented in this entry.</text>
</comment>
<comment type="disease" evidence="7 8 9">
    <disease id="DI-06468">
        <name>Waardenburg syndrome 2F</name>
        <acronym>WS2F</acronym>
        <description>A form of Waardenburg syndrome, an auditory-pigmentary disorder characterized by sensorineural deafness, pigmentary disturbances of the hair, skin and eyes, and absence of dystopia canthorum which is the lateral displacement of the inner canthus of each eye. WS2F is an autosomal recessive form with variable expressivity, characterized by congenital or neonatal-onset sensorineural hearing loss.</description>
        <dbReference type="MIM" id="619947"/>
    </disease>
    <text>The disease may be caused by variants affecting the gene represented in this entry.</text>
</comment>
<comment type="similarity">
    <text evidence="17">Belongs to the SCF family.</text>
</comment>
<comment type="online information" name="Atlas of Genetics and Cytogenetics in Oncology and Haematology">
    <link uri="https://atlasgeneticsoncology.org/gene/142/MGF"/>
</comment>
<comment type="online information" name="Protein Spotlight">
    <link uri="https://www.proteinspotlight.org/back_issues/163/"/>
    <text>two's company - Issue 163 of August 2014</text>
</comment>
<feature type="signal peptide">
    <location>
        <begin position="1"/>
        <end position="25"/>
    </location>
</feature>
<feature type="chain" id="PRO_0000031913" description="Kit ligand">
    <location>
        <begin position="26"/>
        <end position="273"/>
    </location>
</feature>
<feature type="chain" id="PRO_0000403391" description="Soluble KIT ligand">
    <location>
        <begin position="26"/>
        <end position="190"/>
    </location>
</feature>
<feature type="topological domain" description="Extracellular" evidence="2">
    <location>
        <begin position="26"/>
        <end position="214"/>
    </location>
</feature>
<feature type="transmembrane region" description="Helical" evidence="2">
    <location>
        <begin position="215"/>
        <end position="237"/>
    </location>
</feature>
<feature type="topological domain" description="Cytoplasmic" evidence="2">
    <location>
        <begin position="238"/>
        <end position="273"/>
    </location>
</feature>
<feature type="site" description="Not glycosylated">
    <location>
        <position position="97"/>
    </location>
</feature>
<feature type="glycosylation site" description="N-linked (GlcNAc...) asparagine; partial" evidence="3">
    <location>
        <position position="90"/>
    </location>
</feature>
<feature type="glycosylation site" description="N-linked (GlcNAc...) asparagine; partial" evidence="3">
    <location>
        <position position="118"/>
    </location>
</feature>
<feature type="glycosylation site" description="N-linked (GlcNAc...) asparagine" evidence="3">
    <location>
        <position position="145"/>
    </location>
</feature>
<feature type="glycosylation site" description="O-linked (GalNAc...) serine" evidence="3">
    <location>
        <position position="167"/>
    </location>
</feature>
<feature type="glycosylation site" description="O-linked (GalNAc...) threonine" evidence="3">
    <location>
        <position position="168"/>
    </location>
</feature>
<feature type="glycosylation site" description="O-linked (GalNAc...) threonine" evidence="3">
    <location>
        <position position="180"/>
    </location>
</feature>
<feature type="glycosylation site" description="N-linked (GlcNAc...) asparagine" evidence="2">
    <location>
        <position position="195"/>
    </location>
</feature>
<feature type="disulfide bond">
    <location>
        <begin position="29"/>
        <end position="114"/>
    </location>
</feature>
<feature type="disulfide bond">
    <location>
        <begin position="68"/>
        <end position="163"/>
    </location>
</feature>
<feature type="splice variant" id="VSP_032762" description="In isoform 3." evidence="15">
    <location>
        <begin position="1"/>
        <end position="35"/>
    </location>
</feature>
<feature type="splice variant" id="VSP_032763" description="In isoform 3." evidence="15">
    <original>NVKDVTKL</original>
    <variation>MPSCLAAQ</variation>
    <location>
        <begin position="36"/>
        <end position="43"/>
    </location>
</feature>
<feature type="splice variant" id="VSP_006022" description="In isoform 2." evidence="10 11 12 13 14 16">
    <original>DSRVSVTKPFMLPPVAASSLRNDSSSSNR</original>
    <variation>G</variation>
    <location>
        <begin position="174"/>
        <end position="202"/>
    </location>
</feature>
<feature type="sequence variant" id="VAR_087496" description="In WS2F; uncertain significance; dbSNP:rs1870699640." evidence="8 9">
    <original>R</original>
    <variation>C</variation>
    <location>
        <position position="32"/>
    </location>
</feature>
<feature type="sequence variant" id="VAR_063237" description="In FPHH; gain-of-function mutation; sKITLG reveales that the mutant Ser-36 sKITLG increases the content of the melanin by 109% compared with the wild-type sKITLG; tyrosinase activity is significantly increased by the mutant sKITLG compared to wild-type control; dbSNP:rs121918653." evidence="5">
    <original>N</original>
    <variation>S</variation>
    <location>
        <position position="36"/>
    </location>
</feature>
<feature type="sequence variant" id="VAR_042652" description="In dbSNP:rs3741457.">
    <original>T</original>
    <variation>A</variation>
    <location>
        <position position="54"/>
    </location>
</feature>
<feature type="sequence variant" id="VAR_076222" description="In DCUA; loss of cell membrane association." evidence="7">
    <original>HC</original>
    <variation>R</variation>
    <location>
        <begin position="67"/>
        <end position="68"/>
    </location>
</feature>
<feature type="sequence variant" id="VAR_076223" description="In WS2F; uncertain significance; reduces secretion; dbSNP:rs864309655." evidence="7">
    <original>L</original>
    <variation>V</variation>
    <location>
        <position position="104"/>
    </location>
</feature>
<feature type="sequence variant" id="VAR_087497" description="In WS2F; uncertain significance; dbSNP:rs751013211." evidence="9">
    <original>I</original>
    <variation>T</variation>
    <location>
        <position position="148"/>
    </location>
</feature>
<feature type="sequence variant" id="VAR_063238" description="In dbSNP:rs41283112.">
    <original>D</original>
    <variation>Y</variation>
    <location>
        <position position="210"/>
    </location>
</feature>
<feature type="sequence variant" id="VAR_087498" description="In WS2F; uncertain significance." evidence="9">
    <location>
        <begin position="215"/>
        <end position="273"/>
    </location>
</feature>
<feature type="sequence variant" id="VAR_042653" description="In dbSNP:rs12721563.">
    <original>F</original>
    <variation>Y</variation>
    <location>
        <position position="232"/>
    </location>
</feature>
<feature type="sequence conflict" description="In Ref. 3; AAD22048 and 4; AAK92486." evidence="17" ref="3 4">
    <original>L</original>
    <variation>S</variation>
    <location>
        <position position="55"/>
    </location>
</feature>
<feature type="sequence conflict" description="In Ref. 3; AAD22048 and 4; AAK92486." evidence="17" ref="3 4">
    <original>K</original>
    <variation>R</variation>
    <location>
        <position position="128"/>
    </location>
</feature>
<feature type="sequence conflict" description="In Ref. 3; AAD22048 and 4; AAK92486." evidence="17" ref="3 4">
    <original>L</original>
    <variation>F</variation>
    <location>
        <position position="134"/>
    </location>
</feature>
<feature type="turn" evidence="23">
    <location>
        <begin position="30"/>
        <end position="32"/>
    </location>
</feature>
<feature type="helix" evidence="22">
    <location>
        <begin position="37"/>
        <end position="46"/>
    </location>
</feature>
<feature type="strand" evidence="22">
    <location>
        <begin position="53"/>
        <end position="56"/>
    </location>
</feature>
<feature type="turn" evidence="22">
    <location>
        <begin position="59"/>
        <end position="63"/>
    </location>
</feature>
<feature type="helix" evidence="22">
    <location>
        <begin position="66"/>
        <end position="68"/>
    </location>
</feature>
<feature type="helix" evidence="22">
    <location>
        <begin position="70"/>
        <end position="85"/>
    </location>
</feature>
<feature type="strand" evidence="23">
    <location>
        <begin position="92"/>
        <end position="94"/>
    </location>
</feature>
<feature type="helix" evidence="22">
    <location>
        <begin position="97"/>
        <end position="114"/>
    </location>
</feature>
<feature type="strand" evidence="21">
    <location>
        <begin position="120"/>
        <end position="122"/>
    </location>
</feature>
<feature type="strand" evidence="22">
    <location>
        <begin position="132"/>
        <end position="135"/>
    </location>
</feature>
<feature type="helix" evidence="22">
    <location>
        <begin position="137"/>
        <end position="149"/>
    </location>
</feature>
<feature type="turn" evidence="22">
    <location>
        <begin position="150"/>
        <end position="152"/>
    </location>
</feature>
<feature type="strand" evidence="22">
    <location>
        <begin position="157"/>
        <end position="160"/>
    </location>
</feature>
<reference key="1">
    <citation type="journal article" date="1990" name="Cell">
        <title>Primary structure and functional expression of rat and human stem cell factor DNAs.</title>
        <authorList>
            <person name="Martin F.H."/>
            <person name="Suggs S.V."/>
            <person name="Langley K.E."/>
            <person name="Lu H.S."/>
            <person name="Ting J."/>
            <person name="Okino K.H."/>
            <person name="Morris C.F."/>
            <person name="McNiece I.K."/>
            <person name="Jacobsen F.W."/>
            <person name="Mendiaz E.A."/>
            <person name="Birkett N.C."/>
            <person name="Smith K.A."/>
            <person name="Johnson M.J."/>
            <person name="Parker V.P."/>
            <person name="Flores J.C."/>
            <person name="Patel A.C."/>
            <person name="Fisher E.F."/>
            <person name="Erjavec H.O."/>
            <person name="Herrera C.J."/>
            <person name="Wypych J."/>
            <person name="Sachdev R.K."/>
            <person name="Pope J.A."/>
            <person name="Leslie I."/>
            <person name="Wen D."/>
            <person name="Lin C.-H."/>
            <person name="Cupples R.L."/>
            <person name="Zsebo K.M."/>
        </authorList>
    </citation>
    <scope>NUCLEOTIDE SEQUENCE [MRNA] (ISOFORM 1)</scope>
</reference>
<reference key="2">
    <citation type="journal article" date="1991" name="Cell Growth Differ.">
        <title>Alternate splicing of mRNAs encoding human mast cell growth factor and localization of the gene to chromosome 12q22-q24.</title>
        <authorList>
            <person name="Anderson D.M."/>
            <person name="Williams D.E."/>
            <person name="Tushinski R."/>
            <person name="Gimpel S."/>
            <person name="Eisenman J."/>
            <person name="Cannizzaro L.A."/>
            <person name="Aronson M."/>
            <person name="Croce C.M."/>
            <person name="Huebner K."/>
            <person name="Cosman D."/>
        </authorList>
    </citation>
    <scope>NUCLEOTIDE SEQUENCE [MRNA] (ISOFORM 2)</scope>
</reference>
<reference key="3">
    <citation type="journal article" date="1999" name="Biochem. Biophys. Res. Commun.">
        <title>Parathyroid hormone-regulated production of stem cell factor in human osteoblasts and osteoblast-like cells.</title>
        <authorList>
            <person name="Blair H.C."/>
            <person name="Julian B.A."/>
            <person name="Cao X."/>
            <person name="Jordan S.E."/>
            <person name="Dong S.S."/>
        </authorList>
    </citation>
    <scope>NUCLEOTIDE SEQUENCE [MRNA] (ISOFORM 2)</scope>
</reference>
<reference key="4">
    <citation type="submission" date="2001-07" db="EMBL/GenBank/DDBJ databases">
        <authorList>
            <person name="Han C."/>
            <person name="Peng X."/>
            <person name="Yuan J."/>
            <person name="Qiang B."/>
        </authorList>
    </citation>
    <scope>NUCLEOTIDE SEQUENCE [MRNA] (ISOFORMS 1 AND 2)</scope>
</reference>
<reference key="5">
    <citation type="journal article" date="2004" name="Nat. Genet.">
        <title>Complete sequencing and characterization of 21,243 full-length human cDNAs.</title>
        <authorList>
            <person name="Ota T."/>
            <person name="Suzuki Y."/>
            <person name="Nishikawa T."/>
            <person name="Otsuki T."/>
            <person name="Sugiyama T."/>
            <person name="Irie R."/>
            <person name="Wakamatsu A."/>
            <person name="Hayashi K."/>
            <person name="Sato H."/>
            <person name="Nagai K."/>
            <person name="Kimura K."/>
            <person name="Makita H."/>
            <person name="Sekine M."/>
            <person name="Obayashi M."/>
            <person name="Nishi T."/>
            <person name="Shibahara T."/>
            <person name="Tanaka T."/>
            <person name="Ishii S."/>
            <person name="Yamamoto J."/>
            <person name="Saito K."/>
            <person name="Kawai Y."/>
            <person name="Isono Y."/>
            <person name="Nakamura Y."/>
            <person name="Nagahari K."/>
            <person name="Murakami K."/>
            <person name="Yasuda T."/>
            <person name="Iwayanagi T."/>
            <person name="Wagatsuma M."/>
            <person name="Shiratori A."/>
            <person name="Sudo H."/>
            <person name="Hosoiri T."/>
            <person name="Kaku Y."/>
            <person name="Kodaira H."/>
            <person name="Kondo H."/>
            <person name="Sugawara M."/>
            <person name="Takahashi M."/>
            <person name="Kanda K."/>
            <person name="Yokoi T."/>
            <person name="Furuya T."/>
            <person name="Kikkawa E."/>
            <person name="Omura Y."/>
            <person name="Abe K."/>
            <person name="Kamihara K."/>
            <person name="Katsuta N."/>
            <person name="Sato K."/>
            <person name="Tanikawa M."/>
            <person name="Yamazaki M."/>
            <person name="Ninomiya K."/>
            <person name="Ishibashi T."/>
            <person name="Yamashita H."/>
            <person name="Murakawa K."/>
            <person name="Fujimori K."/>
            <person name="Tanai H."/>
            <person name="Kimata M."/>
            <person name="Watanabe M."/>
            <person name="Hiraoka S."/>
            <person name="Chiba Y."/>
            <person name="Ishida S."/>
            <person name="Ono Y."/>
            <person name="Takiguchi S."/>
            <person name="Watanabe S."/>
            <person name="Yosida M."/>
            <person name="Hotuta T."/>
            <person name="Kusano J."/>
            <person name="Kanehori K."/>
            <person name="Takahashi-Fujii A."/>
            <person name="Hara H."/>
            <person name="Tanase T.-O."/>
            <person name="Nomura Y."/>
            <person name="Togiya S."/>
            <person name="Komai F."/>
            <person name="Hara R."/>
            <person name="Takeuchi K."/>
            <person name="Arita M."/>
            <person name="Imose N."/>
            <person name="Musashino K."/>
            <person name="Yuuki H."/>
            <person name="Oshima A."/>
            <person name="Sasaki N."/>
            <person name="Aotsuka S."/>
            <person name="Yoshikawa Y."/>
            <person name="Matsunawa H."/>
            <person name="Ichihara T."/>
            <person name="Shiohata N."/>
            <person name="Sano S."/>
            <person name="Moriya S."/>
            <person name="Momiyama H."/>
            <person name="Satoh N."/>
            <person name="Takami S."/>
            <person name="Terashima Y."/>
            <person name="Suzuki O."/>
            <person name="Nakagawa S."/>
            <person name="Senoh A."/>
            <person name="Mizoguchi H."/>
            <person name="Goto Y."/>
            <person name="Shimizu F."/>
            <person name="Wakebe H."/>
            <person name="Hishigaki H."/>
            <person name="Watanabe T."/>
            <person name="Sugiyama A."/>
            <person name="Takemoto M."/>
            <person name="Kawakami B."/>
            <person name="Yamazaki M."/>
            <person name="Watanabe K."/>
            <person name="Kumagai A."/>
            <person name="Itakura S."/>
            <person name="Fukuzumi Y."/>
            <person name="Fujimori Y."/>
            <person name="Komiyama M."/>
            <person name="Tashiro H."/>
            <person name="Tanigami A."/>
            <person name="Fujiwara T."/>
            <person name="Ono T."/>
            <person name="Yamada K."/>
            <person name="Fujii Y."/>
            <person name="Ozaki K."/>
            <person name="Hirao M."/>
            <person name="Ohmori Y."/>
            <person name="Kawabata A."/>
            <person name="Hikiji T."/>
            <person name="Kobatake N."/>
            <person name="Inagaki H."/>
            <person name="Ikema Y."/>
            <person name="Okamoto S."/>
            <person name="Okitani R."/>
            <person name="Kawakami T."/>
            <person name="Noguchi S."/>
            <person name="Itoh T."/>
            <person name="Shigeta K."/>
            <person name="Senba T."/>
            <person name="Matsumura K."/>
            <person name="Nakajima Y."/>
            <person name="Mizuno T."/>
            <person name="Morinaga M."/>
            <person name="Sasaki M."/>
            <person name="Togashi T."/>
            <person name="Oyama M."/>
            <person name="Hata H."/>
            <person name="Watanabe M."/>
            <person name="Komatsu T."/>
            <person name="Mizushima-Sugano J."/>
            <person name="Satoh T."/>
            <person name="Shirai Y."/>
            <person name="Takahashi Y."/>
            <person name="Nakagawa K."/>
            <person name="Okumura K."/>
            <person name="Nagase T."/>
            <person name="Nomura N."/>
            <person name="Kikuchi H."/>
            <person name="Masuho Y."/>
            <person name="Yamashita R."/>
            <person name="Nakai K."/>
            <person name="Yada T."/>
            <person name="Nakamura Y."/>
            <person name="Ohara O."/>
            <person name="Isogai T."/>
            <person name="Sugano S."/>
        </authorList>
    </citation>
    <scope>NUCLEOTIDE SEQUENCE [LARGE SCALE MRNA] (ISOFORM 2)</scope>
    <source>
        <tissue>Tongue</tissue>
        <tissue>Trachea</tissue>
    </source>
</reference>
<reference key="6">
    <citation type="journal article" date="2007" name="BMC Genomics">
        <title>The full-ORF clone resource of the German cDNA consortium.</title>
        <authorList>
            <person name="Bechtel S."/>
            <person name="Rosenfelder H."/>
            <person name="Duda A."/>
            <person name="Schmidt C.P."/>
            <person name="Ernst U."/>
            <person name="Wellenreuther R."/>
            <person name="Mehrle A."/>
            <person name="Schuster C."/>
            <person name="Bahr A."/>
            <person name="Bloecker H."/>
            <person name="Heubner D."/>
            <person name="Hoerlein A."/>
            <person name="Michel G."/>
            <person name="Wedler H."/>
            <person name="Koehrer K."/>
            <person name="Ottenwaelder B."/>
            <person name="Poustka A."/>
            <person name="Wiemann S."/>
            <person name="Schupp I."/>
        </authorList>
    </citation>
    <scope>NUCLEOTIDE SEQUENCE [LARGE SCALE MRNA] (ISOFORM 3)</scope>
    <source>
        <tissue>Amygdala</tissue>
    </source>
</reference>
<reference key="7">
    <citation type="submission" date="2005-07" db="EMBL/GenBank/DDBJ databases">
        <authorList>
            <person name="Mural R.J."/>
            <person name="Istrail S."/>
            <person name="Sutton G.G."/>
            <person name="Florea L."/>
            <person name="Halpern A.L."/>
            <person name="Mobarry C.M."/>
            <person name="Lippert R."/>
            <person name="Walenz B."/>
            <person name="Shatkay H."/>
            <person name="Dew I."/>
            <person name="Miller J.R."/>
            <person name="Flanigan M.J."/>
            <person name="Edwards N.J."/>
            <person name="Bolanos R."/>
            <person name="Fasulo D."/>
            <person name="Halldorsson B.V."/>
            <person name="Hannenhalli S."/>
            <person name="Turner R."/>
            <person name="Yooseph S."/>
            <person name="Lu F."/>
            <person name="Nusskern D.R."/>
            <person name="Shue B.C."/>
            <person name="Zheng X.H."/>
            <person name="Zhong F."/>
            <person name="Delcher A.L."/>
            <person name="Huson D.H."/>
            <person name="Kravitz S.A."/>
            <person name="Mouchard L."/>
            <person name="Reinert K."/>
            <person name="Remington K.A."/>
            <person name="Clark A.G."/>
            <person name="Waterman M.S."/>
            <person name="Eichler E.E."/>
            <person name="Adams M.D."/>
            <person name="Hunkapiller M.W."/>
            <person name="Myers E.W."/>
            <person name="Venter J.C."/>
        </authorList>
    </citation>
    <scope>NUCLEOTIDE SEQUENCE [LARGE SCALE GENOMIC DNA]</scope>
</reference>
<reference key="8">
    <citation type="journal article" date="2004" name="Genome Res.">
        <title>The status, quality, and expansion of the NIH full-length cDNA project: the Mammalian Gene Collection (MGC).</title>
        <authorList>
            <consortium name="The MGC Project Team"/>
        </authorList>
    </citation>
    <scope>NUCLEOTIDE SEQUENCE [LARGE SCALE MRNA] (ISOFORMS 1 AND 2)</scope>
    <source>
        <tissue>Brain</tissue>
        <tissue>Colon</tissue>
    </source>
</reference>
<reference key="9">
    <citation type="journal article" date="1992" name="Arch. Biochem. Biophys.">
        <title>Post-translational processing of membrane-associated recombinant human stem cell factor expressed in Chinese hamster ovary cells.</title>
        <authorList>
            <person name="Lu H.S."/>
            <person name="Clogston C.L."/>
            <person name="Wypych J."/>
            <person name="Parker V.P."/>
            <person name="Lee T.D."/>
            <person name="Swiderek K."/>
            <person name="Baltera R.F. Jr."/>
            <person name="Patel A.C."/>
            <person name="Chang D.C."/>
            <person name="Brankow D.W."/>
            <person name="Liu X.-D."/>
            <person name="Ogden S.G."/>
            <person name="Karkare S.B."/>
            <person name="Hu S.S."/>
            <person name="Zsebo K.M."/>
            <person name="Langley K.E."/>
        </authorList>
    </citation>
    <scope>PROTEIN SEQUENCE OF 26-40; 64-79; 87-102; 110-149 AND 154-190 (ISOFORM 1)</scope>
    <scope>DISULFIDE BONDS</scope>
    <scope>SUBCELLULAR LOCATION</scope>
    <scope>PROTEOLYTIC PROCESSING</scope>
    <scope>GLYCOSYLATION AT ASN-90; ASN-118; ASN-145; SER-167; THR-168 AND THR-180</scope>
</reference>
<reference key="10">
    <citation type="journal article" date="1992" name="Int. J. Hematol.">
        <title>Expression of two types of kit ligand mRNAs in human tumor cells.</title>
        <authorList>
            <person name="Toyota M."/>
            <person name="Hinoda Y."/>
            <person name="Itoh F."/>
            <person name="Tsujisaki M."/>
            <person name="Imai K."/>
            <person name="Yachi A."/>
        </authorList>
    </citation>
    <scope>NUCLEOTIDE SEQUENCE [MRNA] OF 167-248 (ISOFORM 2)</scope>
</reference>
<reference key="11">
    <citation type="journal article" date="1999" name="Hum. Reprod. Update">
        <title>Stem cell factor/c-kit system in spermatogenesis.</title>
        <authorList>
            <person name="Mauduit C."/>
            <person name="Hamamah S."/>
            <person name="Benahmed M."/>
        </authorList>
    </citation>
    <scope>REVIEW</scope>
</reference>
<reference key="12">
    <citation type="journal article" date="2004" name="Cell. Mol. Life Sci.">
        <title>Signal transduction via the stem cell factor receptor/c-Kit.</title>
        <authorList>
            <person name="Ronnstrand L."/>
        </authorList>
    </citation>
    <scope>REVIEW</scope>
</reference>
<reference key="13">
    <citation type="journal article" date="2005" name="Stem Cells">
        <title>Normal and oncogenic forms of the receptor tyrosine kinase kit.</title>
        <authorList>
            <person name="Lennartsson J."/>
            <person name="Jelacic T."/>
            <person name="Linnekin D."/>
            <person name="Shivakrupa R."/>
        </authorList>
    </citation>
    <scope>REVIEW</scope>
</reference>
<reference key="14">
    <citation type="journal article" date="2007" name="Nat. Genet.">
        <title>Genetic determinants of hair, eye and skin pigmentation in Europeans.</title>
        <authorList>
            <person name="Sulem P."/>
            <person name="Gudbjartsson D.F."/>
            <person name="Stacey S.N."/>
            <person name="Helgason A."/>
            <person name="Rafnar T."/>
            <person name="Magnusson K.P."/>
            <person name="Manolescu A."/>
            <person name="Karason A."/>
            <person name="Palsson A."/>
            <person name="Thorleifsson G."/>
            <person name="Jakobsdottir M."/>
            <person name="Steinberg S."/>
            <person name="Palsson S."/>
            <person name="Jonasson F."/>
            <person name="Sigurgeirsson B."/>
            <person name="Thorisdottir K."/>
            <person name="Ragnarsson R."/>
            <person name="Benediktsdottir K.R."/>
            <person name="Aben K.K."/>
            <person name="Kiemeney L.A."/>
            <person name="Olafsson J.H."/>
            <person name="Gulcher J."/>
            <person name="Kong A."/>
            <person name="Thorsteinsdottir U."/>
            <person name="Stefansson K."/>
        </authorList>
    </citation>
    <scope>INVOLVEMENT IN SHEP7</scope>
</reference>
<reference key="15">
    <citation type="journal article" date="2014" name="Nat. Genet.">
        <title>A molecular basis for classic blond hair color in Europeans.</title>
        <authorList>
            <person name="Guenther C.A."/>
            <person name="Tasic B."/>
            <person name="Luo L."/>
            <person name="Bedell M.A."/>
            <person name="Kingsley D.M."/>
        </authorList>
    </citation>
    <scope>POLYMORPHISM LINKED TO BLOND HAIR COLOR</scope>
</reference>
<reference key="16">
    <citation type="journal article" date="2000" name="EMBO J.">
        <title>Structure of the active core of human stem cell factor and analysis of binding to its receptor kit.</title>
        <authorList>
            <person name="Jiang X."/>
            <person name="Gurel O."/>
            <person name="Mendiaz E.A."/>
            <person name="Stearns G.W."/>
            <person name="Clogston C.L."/>
            <person name="Lu H.S."/>
            <person name="Osslund T.D."/>
            <person name="Syed R.S."/>
            <person name="Langley K.E."/>
            <person name="Hendrickson W.A."/>
        </authorList>
    </citation>
    <scope>X-RAY CRYSTALLOGRAPHY (2.2 ANGSTROMS)</scope>
    <scope>DISULFIDE BONDS</scope>
</reference>
<reference key="17">
    <citation type="journal article" date="2000" name="Proc. Natl. Acad. Sci. U.S.A.">
        <title>Crystal structure of human stem cell factor: implication for stem cell factor receptor dimerization and activation.</title>
        <authorList>
            <person name="Zhang Z."/>
            <person name="Zhang R."/>
            <person name="Joachimiak A."/>
            <person name="Schlessinger J."/>
            <person name="Kong X.P."/>
        </authorList>
    </citation>
    <scope>X-RAY CRYSTALLOGRAPHY (2.3 ANGSTROMS) OF 26-166</scope>
    <scope>DISULFIDE BONDS</scope>
</reference>
<reference key="18">
    <citation type="journal article" date="2007" name="Cell">
        <title>Structural basis for activation of the receptor tyrosine kinase KIT by stem cell factor.</title>
        <authorList>
            <person name="Yuzawa S."/>
            <person name="Opatowsky Y."/>
            <person name="Zhang Z."/>
            <person name="Mandiyan V."/>
            <person name="Lax I."/>
            <person name="Schlessinger J."/>
        </authorList>
    </citation>
    <scope>X-RAY CRYSTALLOGRAPHY (3.5 ANGSTROMS) OF 26-166 IN COMPLEX WITH KIT</scope>
    <scope>DISULFIDE BONDS</scope>
</reference>
<reference key="19">
    <citation type="journal article" date="2009" name="Am. J. Hum. Genet.">
        <title>Gain-of-function mutation of KIT ligand on melanin synthesis causes familial progressive hyperpigmentation.</title>
        <authorList>
            <person name="Wang Z.-Q."/>
            <person name="Si L."/>
            <person name="Tang Q."/>
            <person name="Lin D."/>
            <person name="Fu Z."/>
            <person name="Zhang J."/>
            <person name="Cui B."/>
            <person name="Zhu Y."/>
            <person name="Kong X."/>
            <person name="Deng M."/>
            <person name="Xia Y."/>
            <person name="Xu H."/>
            <person name="Le W."/>
            <person name="Hu L."/>
            <person name="Kong X."/>
        </authorList>
    </citation>
    <scope>VARIANT FPHH SER-36</scope>
    <scope>CHARACTERIZATION OF VARIANT FPHH SER-36</scope>
</reference>
<reference key="20">
    <citation type="journal article" date="2015" name="Am. J. Hum. Genet.">
        <title>Allelic Mutations of KITLG, Encoding KIT Ligand, Cause Asymmetric and Unilateral Hearing Loss and Waardenburg Syndrome Type 2.</title>
        <authorList>
            <consortium name="Baylor-Hopkins Center for Mendelian Genomics"/>
            <person name="Zazo Seco C."/>
            <person name="Serrao de Castro L."/>
            <person name="van Nierop J.W."/>
            <person name="Morin M."/>
            <person name="Jhangiani S."/>
            <person name="Verver E.J."/>
            <person name="Schraders M."/>
            <person name="Maiwald N."/>
            <person name="Wesdorp M."/>
            <person name="Venselaar H."/>
            <person name="Spruijt L."/>
            <person name="Oostrik J."/>
            <person name="Schoots J."/>
            <person name="van Reeuwijk J."/>
            <person name="Lelieveld S.H."/>
            <person name="Huygen P.L."/>
            <person name="Insenser M."/>
            <person name="Admiraal R.J."/>
            <person name="Pennings R.J."/>
            <person name="Hoefsloot L.H."/>
            <person name="Arias-Vasquez A."/>
            <person name="de Ligt J."/>
            <person name="Yntema H.G."/>
            <person name="Jansen J.H."/>
            <person name="Muzny D.M."/>
            <person name="Huls G."/>
            <person name="van Rossum M.M."/>
            <person name="Lupski J.R."/>
            <person name="Moreno-Pelayo M.A."/>
            <person name="Kunst H.P."/>
            <person name="Kremer H."/>
        </authorList>
    </citation>
    <scope>VARIANT DCUA 67-HIS-CYS-68 DELINS ARG</scope>
    <scope>CHARACTERIZATION OF VARIANT DCUA 67-HIS-CYS-68 DELINS ARG</scope>
    <scope>INVOLVEMENT IN DCUA</scope>
    <scope>VARIANT WS2F VAL-104</scope>
    <scope>CHARACTERIZATION OF VARIANT VAL-104</scope>
    <scope>SUBCELLULAR LOCATION (ISOFORM 2)</scope>
</reference>
<reference key="21">
    <citation type="journal article" date="2017" name="Pigment Cell Melanoma Res.">
        <title>Pigmented macules in Waardenburg syndrome type 2 due to KITLG mutation.</title>
        <authorList>
            <person name="Ogawa Y."/>
            <person name="Kono M."/>
            <person name="Akiyama M."/>
        </authorList>
    </citation>
    <scope>VARIANT WS2F CYS-32</scope>
    <scope>INVOLVEMENT IN WS2F</scope>
</reference>
<reference key="22">
    <citation type="journal article" date="2022" name="J. Eur. Acad. Dermatol. Venereol.">
        <title>Biallelic KITLG variants lead to a distinct spectrum of hypomelanosis and sensorineural hearing loss.</title>
        <authorList>
            <person name="Vona B."/>
            <person name="Schwartzbaum D.A."/>
            <person name="Rodriguez A.A."/>
            <person name="Lewis S.S."/>
            <person name="Toosi M.B."/>
            <person name="Radhakrishnan P."/>
            <person name="Bozan N."/>
            <person name="Akin R."/>
            <person name="Doosti M."/>
            <person name="Manju R."/>
            <person name="Duman D."/>
            <person name="Sineni C.J."/>
            <person name="Nampoothiri S."/>
            <person name="Karimiani E.G."/>
            <person name="Houlden H."/>
            <person name="Bademci G."/>
            <person name="Tekin M."/>
            <person name="Girisha K.M."/>
            <person name="Maroofian R."/>
            <person name="Douzgou S."/>
        </authorList>
    </citation>
    <scope>VARIANTS WS2F CYS-32; THR-148 AND 215-TRP--VAL-273 DEL</scope>
    <scope>INVOLVEMENT IN WS2F</scope>
</reference>
<dbReference type="EMBL" id="M59964">
    <property type="protein sequence ID" value="AAA85450.1"/>
    <property type="molecule type" value="mRNA"/>
</dbReference>
<dbReference type="EMBL" id="AF119835">
    <property type="protein sequence ID" value="AAD22048.1"/>
    <property type="molecule type" value="mRNA"/>
</dbReference>
<dbReference type="EMBL" id="AF400436">
    <property type="protein sequence ID" value="AAK92485.1"/>
    <property type="molecule type" value="mRNA"/>
</dbReference>
<dbReference type="EMBL" id="AF400437">
    <property type="protein sequence ID" value="AAK92486.1"/>
    <property type="molecule type" value="mRNA"/>
</dbReference>
<dbReference type="EMBL" id="AK290319">
    <property type="protein sequence ID" value="BAF83008.1"/>
    <property type="molecule type" value="mRNA"/>
</dbReference>
<dbReference type="EMBL" id="AK293002">
    <property type="protein sequence ID" value="BAF85691.1"/>
    <property type="molecule type" value="mRNA"/>
</dbReference>
<dbReference type="EMBL" id="CR749222">
    <property type="protein sequence ID" value="CAH18078.1"/>
    <property type="molecule type" value="mRNA"/>
</dbReference>
<dbReference type="EMBL" id="CH471054">
    <property type="protein sequence ID" value="EAW97417.1"/>
    <property type="molecule type" value="Genomic_DNA"/>
</dbReference>
<dbReference type="EMBL" id="BC069733">
    <property type="protein sequence ID" value="AAH69733.1"/>
    <property type="molecule type" value="mRNA"/>
</dbReference>
<dbReference type="EMBL" id="BC069783">
    <property type="protein sequence ID" value="AAH69783.1"/>
    <property type="molecule type" value="mRNA"/>
</dbReference>
<dbReference type="EMBL" id="BC069797">
    <property type="protein sequence ID" value="AAH69797.1"/>
    <property type="molecule type" value="mRNA"/>
</dbReference>
<dbReference type="EMBL" id="BC074725">
    <property type="protein sequence ID" value="AAH74725.1"/>
    <property type="molecule type" value="mRNA"/>
</dbReference>
<dbReference type="EMBL" id="BC126166">
    <property type="protein sequence ID" value="AAI26167.1"/>
    <property type="molecule type" value="mRNA"/>
</dbReference>
<dbReference type="EMBL" id="BC143899">
    <property type="protein sequence ID" value="AAI43900.1"/>
    <property type="molecule type" value="mRNA"/>
</dbReference>
<dbReference type="EMBL" id="S42571">
    <property type="protein sequence ID" value="AAB22846.2"/>
    <property type="molecule type" value="mRNA"/>
</dbReference>
<dbReference type="CCDS" id="CCDS31867.1">
    <molecule id="P21583-2"/>
</dbReference>
<dbReference type="CCDS" id="CCDS31868.1">
    <molecule id="P21583-1"/>
</dbReference>
<dbReference type="PIR" id="A35974">
    <property type="entry name" value="A35974"/>
</dbReference>
<dbReference type="PIR" id="B61190">
    <property type="entry name" value="B61190"/>
</dbReference>
<dbReference type="PIR" id="S29052">
    <property type="entry name" value="S29052"/>
</dbReference>
<dbReference type="RefSeq" id="NP_000890.1">
    <molecule id="P21583-1"/>
    <property type="nucleotide sequence ID" value="NM_000899.5"/>
</dbReference>
<dbReference type="RefSeq" id="NP_003985.2">
    <molecule id="P21583-2"/>
    <property type="nucleotide sequence ID" value="NM_003994.5"/>
</dbReference>
<dbReference type="PDB" id="1EXZ">
    <property type="method" value="X-ray"/>
    <property type="resolution" value="2.30 A"/>
    <property type="chains" value="A/B/C/D=26-166"/>
</dbReference>
<dbReference type="PDB" id="1SCF">
    <property type="method" value="X-ray"/>
    <property type="resolution" value="2.20 A"/>
    <property type="chains" value="A/B/C/D=1-273"/>
</dbReference>
<dbReference type="PDB" id="2E9W">
    <property type="method" value="X-ray"/>
    <property type="resolution" value="3.50 A"/>
    <property type="chains" value="C/D=26-166"/>
</dbReference>
<dbReference type="PDB" id="8DFM">
    <property type="method" value="EM"/>
    <property type="resolution" value="3.45 A"/>
    <property type="chains" value="C/D=26-166"/>
</dbReference>
<dbReference type="PDB" id="8DFP">
    <property type="method" value="EM"/>
    <property type="resolution" value="3.17 A"/>
    <property type="chains" value="C/D=28-155"/>
</dbReference>
<dbReference type="PDB" id="8DFQ">
    <property type="method" value="EM"/>
    <property type="resolution" value="3.96 A"/>
    <property type="chains" value="C/D=26-166"/>
</dbReference>
<dbReference type="PDBsum" id="1EXZ"/>
<dbReference type="PDBsum" id="1SCF"/>
<dbReference type="PDBsum" id="2E9W"/>
<dbReference type="PDBsum" id="8DFM"/>
<dbReference type="PDBsum" id="8DFP"/>
<dbReference type="PDBsum" id="8DFQ"/>
<dbReference type="EMDB" id="EMD-2648"/>
<dbReference type="EMDB" id="EMD-27408"/>
<dbReference type="EMDB" id="EMD-27410"/>
<dbReference type="EMDB" id="EMD-27411"/>
<dbReference type="SMR" id="P21583"/>
<dbReference type="BioGRID" id="110410">
    <property type="interactions" value="33"/>
</dbReference>
<dbReference type="FunCoup" id="P21583">
    <property type="interactions" value="1038"/>
</dbReference>
<dbReference type="IntAct" id="P21583">
    <property type="interactions" value="13"/>
</dbReference>
<dbReference type="STRING" id="9606.ENSP00000495951"/>
<dbReference type="BindingDB" id="P21583"/>
<dbReference type="ChEMBL" id="CHEMBL2346489"/>
<dbReference type="GlyCosmos" id="P21583">
    <property type="glycosylation" value="7 sites, No reported glycans"/>
</dbReference>
<dbReference type="GlyGen" id="P21583">
    <property type="glycosylation" value="10 sites, 2 N-linked glycans (1 site), 1 O-linked glycan (5 sites)"/>
</dbReference>
<dbReference type="iPTMnet" id="P21583"/>
<dbReference type="MetOSite" id="P21583"/>
<dbReference type="PhosphoSitePlus" id="P21583"/>
<dbReference type="BioMuta" id="KITLG"/>
<dbReference type="DMDM" id="134289"/>
<dbReference type="jPOST" id="P21583"/>
<dbReference type="MassIVE" id="P21583"/>
<dbReference type="PaxDb" id="9606-ENSP00000228280"/>
<dbReference type="PeptideAtlas" id="P21583"/>
<dbReference type="ProteomicsDB" id="53880">
    <molecule id="P21583-1"/>
</dbReference>
<dbReference type="ProteomicsDB" id="53881">
    <molecule id="P21583-2"/>
</dbReference>
<dbReference type="ProteomicsDB" id="53882">
    <molecule id="P21583-3"/>
</dbReference>
<dbReference type="Pumba" id="P21583"/>
<dbReference type="Antibodypedia" id="3883">
    <property type="antibodies" value="924 antibodies from 47 providers"/>
</dbReference>
<dbReference type="DNASU" id="4254"/>
<dbReference type="Ensembl" id="ENST00000347404.10">
    <molecule id="P21583-2"/>
    <property type="protein sequence ID" value="ENSP00000054216.5"/>
    <property type="gene ID" value="ENSG00000049130.16"/>
</dbReference>
<dbReference type="Ensembl" id="ENST00000644744.1">
    <molecule id="P21583-1"/>
    <property type="protein sequence ID" value="ENSP00000495951.1"/>
    <property type="gene ID" value="ENSG00000049130.16"/>
</dbReference>
<dbReference type="GeneID" id="4254"/>
<dbReference type="KEGG" id="hsa:4254"/>
<dbReference type="MANE-Select" id="ENST00000644744.1">
    <property type="protein sequence ID" value="ENSP00000495951.1"/>
    <property type="RefSeq nucleotide sequence ID" value="NM_000899.5"/>
    <property type="RefSeq protein sequence ID" value="NP_000890.1"/>
</dbReference>
<dbReference type="UCSC" id="uc001tav.4">
    <molecule id="P21583-1"/>
    <property type="organism name" value="human"/>
</dbReference>
<dbReference type="AGR" id="HGNC:6343"/>
<dbReference type="CTD" id="4254"/>
<dbReference type="DisGeNET" id="4254"/>
<dbReference type="GeneCards" id="KITLG"/>
<dbReference type="HGNC" id="HGNC:6343">
    <property type="gene designation" value="KITLG"/>
</dbReference>
<dbReference type="HPA" id="ENSG00000049130">
    <property type="expression patterns" value="Low tissue specificity"/>
</dbReference>
<dbReference type="MalaCards" id="KITLG"/>
<dbReference type="MIM" id="145250">
    <property type="type" value="phenotype"/>
</dbReference>
<dbReference type="MIM" id="184745">
    <property type="type" value="gene"/>
</dbReference>
<dbReference type="MIM" id="611664">
    <property type="type" value="phenotype"/>
</dbReference>
<dbReference type="MIM" id="616697">
    <property type="type" value="phenotype"/>
</dbReference>
<dbReference type="MIM" id="619947">
    <property type="type" value="phenotype"/>
</dbReference>
<dbReference type="neXtProt" id="NX_P21583"/>
<dbReference type="OpenTargets" id="ENSG00000049130"/>
<dbReference type="Orphanet" id="280628">
    <property type="disease" value="Familial progressive hyper- and hypopigmentation"/>
</dbReference>
<dbReference type="Orphanet" id="79146">
    <property type="disease" value="Familial progressive hyperpigmentation"/>
</dbReference>
<dbReference type="Orphanet" id="363494">
    <property type="disease" value="Non-seminomatous germ cell tumor of testis"/>
</dbReference>
<dbReference type="Orphanet" id="90635">
    <property type="disease" value="Rare autosomal dominant non-syndromic sensorineural deafness type DFNA"/>
</dbReference>
<dbReference type="Orphanet" id="895">
    <property type="disease" value="Waardenburg syndrome type 2"/>
</dbReference>
<dbReference type="PharmGKB" id="PA30129"/>
<dbReference type="VEuPathDB" id="HostDB:ENSG00000049130"/>
<dbReference type="eggNOG" id="ENOG502QTGT">
    <property type="taxonomic scope" value="Eukaryota"/>
</dbReference>
<dbReference type="GeneTree" id="ENSGT00390000018272"/>
<dbReference type="HOGENOM" id="CLU_090207_0_0_1"/>
<dbReference type="InParanoid" id="P21583"/>
<dbReference type="OMA" id="TKGICRN"/>
<dbReference type="OrthoDB" id="8445223at2759"/>
<dbReference type="PAN-GO" id="P21583">
    <property type="GO annotations" value="4 GO annotations based on evolutionary models"/>
</dbReference>
<dbReference type="PhylomeDB" id="P21583"/>
<dbReference type="TreeFam" id="TF330811"/>
<dbReference type="PathwayCommons" id="P21583"/>
<dbReference type="Reactome" id="R-HSA-1257604">
    <molecule id="P21583-1"/>
    <property type="pathway name" value="PIP3 activates AKT signaling"/>
</dbReference>
<dbReference type="Reactome" id="R-HSA-1433557">
    <molecule id="P21583-1"/>
    <property type="pathway name" value="Signaling by SCF-KIT"/>
</dbReference>
<dbReference type="Reactome" id="R-HSA-1433559">
    <molecule id="P21583-1"/>
    <property type="pathway name" value="Regulation of KIT signaling"/>
</dbReference>
<dbReference type="Reactome" id="R-HSA-2219530">
    <molecule id="P21583-1"/>
    <property type="pathway name" value="Constitutive Signaling by Aberrant PI3K in Cancer"/>
</dbReference>
<dbReference type="Reactome" id="R-HSA-5673001">
    <molecule id="P21583-1"/>
    <property type="pathway name" value="RAF/MAP kinase cascade"/>
</dbReference>
<dbReference type="Reactome" id="R-HSA-6811558">
    <molecule id="P21583-1"/>
    <property type="pathway name" value="PI5P, PP2A and IER3 Regulate PI3K/AKT Signaling"/>
</dbReference>
<dbReference type="Reactome" id="R-HSA-9856649">
    <molecule id="P21583-1"/>
    <property type="pathway name" value="Transcriptional and post-translational regulation of MITF-M expression and activity"/>
</dbReference>
<dbReference type="SignaLink" id="P21583"/>
<dbReference type="SIGNOR" id="P21583"/>
<dbReference type="BioGRID-ORCS" id="4254">
    <property type="hits" value="3 hits in 1155 CRISPR screens"/>
</dbReference>
<dbReference type="ChiTaRS" id="KITLG">
    <property type="organism name" value="human"/>
</dbReference>
<dbReference type="EvolutionaryTrace" id="P21583"/>
<dbReference type="GeneWiki" id="Stem_cell_factor"/>
<dbReference type="GenomeRNAi" id="4254"/>
<dbReference type="Pharos" id="P21583">
    <property type="development level" value="Tbio"/>
</dbReference>
<dbReference type="PRO" id="PR:P21583"/>
<dbReference type="Proteomes" id="UP000005640">
    <property type="component" value="Chromosome 12"/>
</dbReference>
<dbReference type="RNAct" id="P21583">
    <property type="molecule type" value="protein"/>
</dbReference>
<dbReference type="Bgee" id="ENSG00000049130">
    <property type="expression patterns" value="Expressed in visceral pleura and 187 other cell types or tissues"/>
</dbReference>
<dbReference type="ExpressionAtlas" id="P21583">
    <property type="expression patterns" value="baseline and differential"/>
</dbReference>
<dbReference type="GO" id="GO:0005737">
    <property type="term" value="C:cytoplasm"/>
    <property type="evidence" value="ECO:0000314"/>
    <property type="project" value="UniProtKB"/>
</dbReference>
<dbReference type="GO" id="GO:0005856">
    <property type="term" value="C:cytoskeleton"/>
    <property type="evidence" value="ECO:0007669"/>
    <property type="project" value="UniProtKB-SubCell"/>
</dbReference>
<dbReference type="GO" id="GO:0005576">
    <property type="term" value="C:extracellular region"/>
    <property type="evidence" value="ECO:0000304"/>
    <property type="project" value="Reactome"/>
</dbReference>
<dbReference type="GO" id="GO:0005615">
    <property type="term" value="C:extracellular space"/>
    <property type="evidence" value="ECO:0007669"/>
    <property type="project" value="Ensembl"/>
</dbReference>
<dbReference type="GO" id="GO:0030175">
    <property type="term" value="C:filopodium"/>
    <property type="evidence" value="ECO:0000314"/>
    <property type="project" value="UniProtKB"/>
</dbReference>
<dbReference type="GO" id="GO:0030027">
    <property type="term" value="C:lamellipodium"/>
    <property type="evidence" value="ECO:0000314"/>
    <property type="project" value="UniProtKB"/>
</dbReference>
<dbReference type="GO" id="GO:0005886">
    <property type="term" value="C:plasma membrane"/>
    <property type="evidence" value="ECO:0000314"/>
    <property type="project" value="UniProtKB"/>
</dbReference>
<dbReference type="GO" id="GO:0005125">
    <property type="term" value="F:cytokine activity"/>
    <property type="evidence" value="ECO:0000318"/>
    <property type="project" value="GO_Central"/>
</dbReference>
<dbReference type="GO" id="GO:0008083">
    <property type="term" value="F:growth factor activity"/>
    <property type="evidence" value="ECO:0007669"/>
    <property type="project" value="UniProtKB-KW"/>
</dbReference>
<dbReference type="GO" id="GO:0005173">
    <property type="term" value="F:stem cell factor receptor binding"/>
    <property type="evidence" value="ECO:0000318"/>
    <property type="project" value="GO_Central"/>
</dbReference>
<dbReference type="GO" id="GO:0007155">
    <property type="term" value="P:cell adhesion"/>
    <property type="evidence" value="ECO:0007669"/>
    <property type="project" value="UniProtKB-KW"/>
</dbReference>
<dbReference type="GO" id="GO:0035234">
    <property type="term" value="P:ectopic germ cell programmed cell death"/>
    <property type="evidence" value="ECO:0007669"/>
    <property type="project" value="Ensembl"/>
</dbReference>
<dbReference type="GO" id="GO:0035162">
    <property type="term" value="P:embryonic hemopoiesis"/>
    <property type="evidence" value="ECO:0000314"/>
    <property type="project" value="DFLAT"/>
</dbReference>
<dbReference type="GO" id="GO:0097192">
    <property type="term" value="P:extrinsic apoptotic signaling pathway in absence of ligand"/>
    <property type="evidence" value="ECO:0007669"/>
    <property type="project" value="Ensembl"/>
</dbReference>
<dbReference type="GO" id="GO:0002244">
    <property type="term" value="P:hematopoietic progenitor cell differentiation"/>
    <property type="evidence" value="ECO:0007669"/>
    <property type="project" value="Ensembl"/>
</dbReference>
<dbReference type="GO" id="GO:0008584">
    <property type="term" value="P:male gonad development"/>
    <property type="evidence" value="ECO:0000270"/>
    <property type="project" value="UniProtKB"/>
</dbReference>
<dbReference type="GO" id="GO:0033024">
    <property type="term" value="P:mast cell apoptotic process"/>
    <property type="evidence" value="ECO:0007669"/>
    <property type="project" value="Ensembl"/>
</dbReference>
<dbReference type="GO" id="GO:0097531">
    <property type="term" value="P:mast cell migration"/>
    <property type="evidence" value="ECO:0007669"/>
    <property type="project" value="Ensembl"/>
</dbReference>
<dbReference type="GO" id="GO:0070662">
    <property type="term" value="P:mast cell proliferation"/>
    <property type="evidence" value="ECO:0007669"/>
    <property type="project" value="Ensembl"/>
</dbReference>
<dbReference type="GO" id="GO:0097324">
    <property type="term" value="P:melanocyte migration"/>
    <property type="evidence" value="ECO:0007669"/>
    <property type="project" value="Ensembl"/>
</dbReference>
<dbReference type="GO" id="GO:0002573">
    <property type="term" value="P:myeloid leukocyte differentiation"/>
    <property type="evidence" value="ECO:0007669"/>
    <property type="project" value="Ensembl"/>
</dbReference>
<dbReference type="GO" id="GO:0033026">
    <property type="term" value="P:negative regulation of mast cell apoptotic process"/>
    <property type="evidence" value="ECO:0007669"/>
    <property type="project" value="Ensembl"/>
</dbReference>
<dbReference type="GO" id="GO:0001755">
    <property type="term" value="P:neural crest cell migration"/>
    <property type="evidence" value="ECO:0007669"/>
    <property type="project" value="Ensembl"/>
</dbReference>
<dbReference type="GO" id="GO:0001541">
    <property type="term" value="P:ovarian follicle development"/>
    <property type="evidence" value="ECO:0007669"/>
    <property type="project" value="Ensembl"/>
</dbReference>
<dbReference type="GO" id="GO:0008284">
    <property type="term" value="P:positive regulation of cell population proliferation"/>
    <property type="evidence" value="ECO:0000314"/>
    <property type="project" value="BHF-UCL"/>
</dbReference>
<dbReference type="GO" id="GO:1901534">
    <property type="term" value="P:positive regulation of hematopoietic progenitor cell differentiation"/>
    <property type="evidence" value="ECO:0000304"/>
    <property type="project" value="GO_Central"/>
</dbReference>
<dbReference type="GO" id="GO:1902035">
    <property type="term" value="P:positive regulation of hematopoietic stem cell proliferation"/>
    <property type="evidence" value="ECO:0007669"/>
    <property type="project" value="Ensembl"/>
</dbReference>
<dbReference type="GO" id="GO:0002687">
    <property type="term" value="P:positive regulation of leukocyte migration"/>
    <property type="evidence" value="ECO:0007669"/>
    <property type="project" value="Ensembl"/>
</dbReference>
<dbReference type="GO" id="GO:0070668">
    <property type="term" value="P:positive regulation of mast cell proliferation"/>
    <property type="evidence" value="ECO:0007669"/>
    <property type="project" value="Ensembl"/>
</dbReference>
<dbReference type="GO" id="GO:0045636">
    <property type="term" value="P:positive regulation of melanocyte differentiation"/>
    <property type="evidence" value="ECO:0007669"/>
    <property type="project" value="Ensembl"/>
</dbReference>
<dbReference type="GO" id="GO:0002763">
    <property type="term" value="P:positive regulation of myeloid leukocyte differentiation"/>
    <property type="evidence" value="ECO:0007669"/>
    <property type="project" value="Ensembl"/>
</dbReference>
<dbReference type="GO" id="GO:0046579">
    <property type="term" value="P:positive regulation of Ras protein signal transduction"/>
    <property type="evidence" value="ECO:0007669"/>
    <property type="project" value="Ensembl"/>
</dbReference>
<dbReference type="GO" id="GO:0042102">
    <property type="term" value="P:positive regulation of T cell proliferation"/>
    <property type="evidence" value="ECO:0007669"/>
    <property type="project" value="Ensembl"/>
</dbReference>
<dbReference type="GO" id="GO:0007265">
    <property type="term" value="P:Ras protein signal transduction"/>
    <property type="evidence" value="ECO:0007669"/>
    <property type="project" value="Ensembl"/>
</dbReference>
<dbReference type="GO" id="GO:0042098">
    <property type="term" value="P:T cell proliferation"/>
    <property type="evidence" value="ECO:0007669"/>
    <property type="project" value="Ensembl"/>
</dbReference>
<dbReference type="DisProt" id="DP00917"/>
<dbReference type="FunFam" id="1.20.1250.10:FF:000004">
    <property type="entry name" value="Kit ligand"/>
    <property type="match status" value="1"/>
</dbReference>
<dbReference type="Gene3D" id="1.20.1250.10">
    <property type="match status" value="1"/>
</dbReference>
<dbReference type="InterPro" id="IPR009079">
    <property type="entry name" value="4_helix_cytokine-like_core"/>
</dbReference>
<dbReference type="InterPro" id="IPR003452">
    <property type="entry name" value="SCF"/>
</dbReference>
<dbReference type="PANTHER" id="PTHR11574">
    <property type="entry name" value="KIT LIGAND"/>
    <property type="match status" value="1"/>
</dbReference>
<dbReference type="PANTHER" id="PTHR11574:SF0">
    <property type="entry name" value="KIT LIGAND"/>
    <property type="match status" value="1"/>
</dbReference>
<dbReference type="Pfam" id="PF02404">
    <property type="entry name" value="SCF"/>
    <property type="match status" value="1"/>
</dbReference>
<dbReference type="PIRSF" id="PIRSF015599">
    <property type="entry name" value="SCF"/>
    <property type="match status" value="1"/>
</dbReference>
<dbReference type="SUPFAM" id="SSF47266">
    <property type="entry name" value="4-helical cytokines"/>
    <property type="match status" value="1"/>
</dbReference>